<dbReference type="EC" id="2.-.-.-"/>
<dbReference type="EMBL" id="CR382122">
    <property type="protein sequence ID" value="CAH02246.1"/>
    <property type="molecule type" value="Genomic_DNA"/>
</dbReference>
<dbReference type="RefSeq" id="XP_451853.1">
    <property type="nucleotide sequence ID" value="XM_451853.1"/>
</dbReference>
<dbReference type="SMR" id="Q6CW36"/>
<dbReference type="FunCoup" id="Q6CW36">
    <property type="interactions" value="511"/>
</dbReference>
<dbReference type="STRING" id="284590.Q6CW36"/>
<dbReference type="GlyCosmos" id="Q6CW36">
    <property type="glycosylation" value="5 sites, No reported glycans"/>
</dbReference>
<dbReference type="PaxDb" id="284590-Q6CW36"/>
<dbReference type="KEGG" id="kla:KLLA0_B07249g"/>
<dbReference type="eggNOG" id="KOG2124">
    <property type="taxonomic scope" value="Eukaryota"/>
</dbReference>
<dbReference type="HOGENOM" id="CLU_007676_0_0_1"/>
<dbReference type="InParanoid" id="Q6CW36"/>
<dbReference type="OMA" id="QSYFHRE"/>
<dbReference type="UniPathway" id="UPA00196"/>
<dbReference type="Proteomes" id="UP000000598">
    <property type="component" value="Chromosome B"/>
</dbReference>
<dbReference type="GO" id="GO:0005789">
    <property type="term" value="C:endoplasmic reticulum membrane"/>
    <property type="evidence" value="ECO:0007669"/>
    <property type="project" value="UniProtKB-SubCell"/>
</dbReference>
<dbReference type="GO" id="GO:0051377">
    <property type="term" value="F:mannose-ethanolamine phosphotransferase activity"/>
    <property type="evidence" value="ECO:0007669"/>
    <property type="project" value="InterPro"/>
</dbReference>
<dbReference type="GO" id="GO:0071555">
    <property type="term" value="P:cell wall organization"/>
    <property type="evidence" value="ECO:0007669"/>
    <property type="project" value="UniProtKB-KW"/>
</dbReference>
<dbReference type="GO" id="GO:0006506">
    <property type="term" value="P:GPI anchor biosynthetic process"/>
    <property type="evidence" value="ECO:0007669"/>
    <property type="project" value="UniProtKB-UniPathway"/>
</dbReference>
<dbReference type="CDD" id="cd16020">
    <property type="entry name" value="GPI_EPT_1"/>
    <property type="match status" value="1"/>
</dbReference>
<dbReference type="FunFam" id="3.40.720.10:FF:000015">
    <property type="entry name" value="GPI ethanolamine phosphate transferase 1"/>
    <property type="match status" value="1"/>
</dbReference>
<dbReference type="Gene3D" id="3.40.720.10">
    <property type="entry name" value="Alkaline Phosphatase, subunit A"/>
    <property type="match status" value="1"/>
</dbReference>
<dbReference type="InterPro" id="IPR017850">
    <property type="entry name" value="Alkaline_phosphatase_core_sf"/>
</dbReference>
<dbReference type="InterPro" id="IPR007070">
    <property type="entry name" value="GPI_EtnP_transferase_1"/>
</dbReference>
<dbReference type="InterPro" id="IPR017852">
    <property type="entry name" value="GPI_EtnP_transferase_1_C"/>
</dbReference>
<dbReference type="InterPro" id="IPR037671">
    <property type="entry name" value="PIGN_N"/>
</dbReference>
<dbReference type="InterPro" id="IPR000917">
    <property type="entry name" value="Sulfatase_N"/>
</dbReference>
<dbReference type="PANTHER" id="PTHR12250:SF0">
    <property type="entry name" value="GPI ETHANOLAMINE PHOSPHATE TRANSFERASE 1"/>
    <property type="match status" value="1"/>
</dbReference>
<dbReference type="PANTHER" id="PTHR12250">
    <property type="entry name" value="PHOSPHATIDYLINOSITOL GLYCAN, CLASS N"/>
    <property type="match status" value="1"/>
</dbReference>
<dbReference type="Pfam" id="PF04987">
    <property type="entry name" value="PigN"/>
    <property type="match status" value="1"/>
</dbReference>
<dbReference type="Pfam" id="PF00884">
    <property type="entry name" value="Sulfatase"/>
    <property type="match status" value="1"/>
</dbReference>
<dbReference type="SUPFAM" id="SSF53649">
    <property type="entry name" value="Alkaline phosphatase-like"/>
    <property type="match status" value="1"/>
</dbReference>
<accession>Q6CW36</accession>
<protein>
    <recommendedName>
        <fullName>GPI ethanolamine phosphate transferase 1</fullName>
        <ecNumber>2.-.-.-</ecNumber>
    </recommendedName>
</protein>
<reference key="1">
    <citation type="journal article" date="2004" name="Nature">
        <title>Genome evolution in yeasts.</title>
        <authorList>
            <person name="Dujon B."/>
            <person name="Sherman D."/>
            <person name="Fischer G."/>
            <person name="Durrens P."/>
            <person name="Casaregola S."/>
            <person name="Lafontaine I."/>
            <person name="de Montigny J."/>
            <person name="Marck C."/>
            <person name="Neuveglise C."/>
            <person name="Talla E."/>
            <person name="Goffard N."/>
            <person name="Frangeul L."/>
            <person name="Aigle M."/>
            <person name="Anthouard V."/>
            <person name="Babour A."/>
            <person name="Barbe V."/>
            <person name="Barnay S."/>
            <person name="Blanchin S."/>
            <person name="Beckerich J.-M."/>
            <person name="Beyne E."/>
            <person name="Bleykasten C."/>
            <person name="Boisrame A."/>
            <person name="Boyer J."/>
            <person name="Cattolico L."/>
            <person name="Confanioleri F."/>
            <person name="de Daruvar A."/>
            <person name="Despons L."/>
            <person name="Fabre E."/>
            <person name="Fairhead C."/>
            <person name="Ferry-Dumazet H."/>
            <person name="Groppi A."/>
            <person name="Hantraye F."/>
            <person name="Hennequin C."/>
            <person name="Jauniaux N."/>
            <person name="Joyet P."/>
            <person name="Kachouri R."/>
            <person name="Kerrest A."/>
            <person name="Koszul R."/>
            <person name="Lemaire M."/>
            <person name="Lesur I."/>
            <person name="Ma L."/>
            <person name="Muller H."/>
            <person name="Nicaud J.-M."/>
            <person name="Nikolski M."/>
            <person name="Oztas S."/>
            <person name="Ozier-Kalogeropoulos O."/>
            <person name="Pellenz S."/>
            <person name="Potier S."/>
            <person name="Richard G.-F."/>
            <person name="Straub M.-L."/>
            <person name="Suleau A."/>
            <person name="Swennen D."/>
            <person name="Tekaia F."/>
            <person name="Wesolowski-Louvel M."/>
            <person name="Westhof E."/>
            <person name="Wirth B."/>
            <person name="Zeniou-Meyer M."/>
            <person name="Zivanovic Y."/>
            <person name="Bolotin-Fukuhara M."/>
            <person name="Thierry A."/>
            <person name="Bouchier C."/>
            <person name="Caudron B."/>
            <person name="Scarpelli C."/>
            <person name="Gaillardin C."/>
            <person name="Weissenbach J."/>
            <person name="Wincker P."/>
            <person name="Souciet J.-L."/>
        </authorList>
    </citation>
    <scope>NUCLEOTIDE SEQUENCE [LARGE SCALE GENOMIC DNA]</scope>
    <source>
        <strain>ATCC 8585 / CBS 2359 / DSM 70799 / NBRC 1267 / NRRL Y-1140 / WM37</strain>
    </source>
</reference>
<feature type="chain" id="PRO_0000246209" description="GPI ethanolamine phosphate transferase 1">
    <location>
        <begin position="1"/>
        <end position="919"/>
    </location>
</feature>
<feature type="topological domain" description="Cytoplasmic" evidence="2">
    <location>
        <begin position="1"/>
        <end position="8"/>
    </location>
</feature>
<feature type="transmembrane region" description="Helical" evidence="2">
    <location>
        <begin position="9"/>
        <end position="29"/>
    </location>
</feature>
<feature type="topological domain" description="Lumenal" evidence="2">
    <location>
        <begin position="30"/>
        <end position="456"/>
    </location>
</feature>
<feature type="transmembrane region" description="Helical" evidence="2">
    <location>
        <begin position="457"/>
        <end position="477"/>
    </location>
</feature>
<feature type="topological domain" description="Cytoplasmic" evidence="2">
    <location>
        <begin position="478"/>
        <end position="487"/>
    </location>
</feature>
<feature type="transmembrane region" description="Helical" evidence="2">
    <location>
        <begin position="488"/>
        <end position="508"/>
    </location>
</feature>
<feature type="topological domain" description="Lumenal" evidence="2">
    <location>
        <begin position="509"/>
        <end position="510"/>
    </location>
</feature>
<feature type="transmembrane region" description="Helical" evidence="2">
    <location>
        <begin position="511"/>
        <end position="531"/>
    </location>
</feature>
<feature type="topological domain" description="Cytoplasmic" evidence="2">
    <location>
        <begin position="532"/>
        <end position="558"/>
    </location>
</feature>
<feature type="transmembrane region" description="Helical" evidence="2">
    <location>
        <begin position="559"/>
        <end position="579"/>
    </location>
</feature>
<feature type="topological domain" description="Lumenal" evidence="2">
    <location>
        <begin position="580"/>
        <end position="598"/>
    </location>
</feature>
<feature type="transmembrane region" description="Helical" evidence="2">
    <location>
        <begin position="599"/>
        <end position="619"/>
    </location>
</feature>
<feature type="topological domain" description="Cytoplasmic" evidence="2">
    <location>
        <position position="620"/>
    </location>
</feature>
<feature type="transmembrane region" description="Helical" evidence="2">
    <location>
        <begin position="621"/>
        <end position="641"/>
    </location>
</feature>
<feature type="topological domain" description="Lumenal" evidence="2">
    <location>
        <begin position="642"/>
        <end position="653"/>
    </location>
</feature>
<feature type="transmembrane region" description="Helical" evidence="2">
    <location>
        <begin position="654"/>
        <end position="674"/>
    </location>
</feature>
<feature type="topological domain" description="Cytoplasmic" evidence="2">
    <location>
        <begin position="675"/>
        <end position="686"/>
    </location>
</feature>
<feature type="transmembrane region" description="Helical" evidence="2">
    <location>
        <begin position="687"/>
        <end position="707"/>
    </location>
</feature>
<feature type="topological domain" description="Lumenal" evidence="2">
    <location>
        <begin position="708"/>
        <end position="718"/>
    </location>
</feature>
<feature type="transmembrane region" description="Helical" evidence="2">
    <location>
        <begin position="719"/>
        <end position="739"/>
    </location>
</feature>
<feature type="topological domain" description="Cytoplasmic" evidence="2">
    <location>
        <begin position="740"/>
        <end position="773"/>
    </location>
</feature>
<feature type="transmembrane region" description="Helical" evidence="2">
    <location>
        <begin position="774"/>
        <end position="794"/>
    </location>
</feature>
<feature type="topological domain" description="Lumenal" evidence="2">
    <location>
        <begin position="795"/>
        <end position="815"/>
    </location>
</feature>
<feature type="transmembrane region" description="Helical" evidence="2">
    <location>
        <begin position="816"/>
        <end position="836"/>
    </location>
</feature>
<feature type="topological domain" description="Cytoplasmic" evidence="2">
    <location>
        <begin position="837"/>
        <end position="845"/>
    </location>
</feature>
<feature type="transmembrane region" description="Helical" evidence="2">
    <location>
        <begin position="846"/>
        <end position="866"/>
    </location>
</feature>
<feature type="topological domain" description="Lumenal" evidence="2">
    <location>
        <begin position="867"/>
        <end position="882"/>
    </location>
</feature>
<feature type="transmembrane region" description="Helical" evidence="2">
    <location>
        <begin position="883"/>
        <end position="903"/>
    </location>
</feature>
<feature type="topological domain" description="Cytoplasmic" evidence="2">
    <location>
        <begin position="904"/>
        <end position="919"/>
    </location>
</feature>
<feature type="glycosylation site" description="N-linked (GlcNAc...) asparagine" evidence="2">
    <location>
        <position position="138"/>
    </location>
</feature>
<feature type="glycosylation site" description="N-linked (GlcNAc...) asparagine" evidence="2">
    <location>
        <position position="196"/>
    </location>
</feature>
<feature type="glycosylation site" description="N-linked (GlcNAc...) asparagine" evidence="2">
    <location>
        <position position="201"/>
    </location>
</feature>
<feature type="glycosylation site" description="N-linked (GlcNAc...) asparagine" evidence="2">
    <location>
        <position position="285"/>
    </location>
</feature>
<feature type="glycosylation site" description="N-linked (GlcNAc...) asparagine" evidence="2">
    <location>
        <position position="311"/>
    </location>
</feature>
<sequence length="919" mass="105516">MWSRHRLYFIVAGVLFHLFYLWSIFDIYFVSPLVHGMKQHQSTDEAPAKRLFLIVGDGLRADTTFDKILHPVTGEHDYLAPYIRDLVRNEATYGVSHTRMPTESRPGHVAMIAGFYEDVSAVTKGWQENPVDFDSFFNQSKHTYSFGSPDILPMFKDGATPNKVDAWMYGHEFEDFTQSSIELDAFVFRHIYELFNNTKSNKTLETEIKQDGNVFFLHLLGCDTAGHSYRPYSAEYYDNVKYIDKEVKLLVEKVHEFFDDEDTAFIFTADHGMSAFGSHGDGHPNNTRTPLVAWGAGINKPVKNQAPIFDNYTENWNLADIKRNDVNQADIASLMSYLIGANYPVNSVGELPLNFIDAPEDKKLNALFNNAKAILEQYLVKEQEIIASQFVYKEYEAFVEIPYQEYLQQIESLIERIAKGENELEPDAIKLTEELMKVTLDGLAYLTTYNWRFIRTIVTLGFLGWIVYSFSIFLRLFILNRDYNSHKSLLNYFIFGSLTIILNYVLYYQKAPFNYYMYLFFPLIFWSEIFTDRVVLDDGVKEFLKGISIPKRIILVSAIILVYESIVYAFFDRWIFSLIFNMLSFYPLICGYRDWKRNTLWFITGAAISVFTLLDAVKIESLTQINIASGLIVLTALSGFLHLRKQLNSYTTTVFICQILLVILMVLATNKSIVSLQNRTGLPRDAQVAGWVILVVSLLLMPLIHYMKPNNNYKVRMLIIFLTFAPTFIILTISFESFFYLVFSAYIVQWIEIESKLKEQTPNTSHYKQLIRVTIIGFFLLQNAFFGTGNVASISSFSLDSVYRLMPIFDPFPMGALLVIKLIIPYIILSAGLGILNLKLHIKDYTISTLIISTSDILSLNFFYLLKTEGSWLDIGITISNYCLAILSSLFMLILEIVAHVVLKNVQLSKPVIASKKTN</sequence>
<name>MCD4_KLULA</name>
<keyword id="KW-0961">Cell wall biogenesis/degradation</keyword>
<keyword id="KW-0256">Endoplasmic reticulum</keyword>
<keyword id="KW-0325">Glycoprotein</keyword>
<keyword id="KW-0337">GPI-anchor biosynthesis</keyword>
<keyword id="KW-0472">Membrane</keyword>
<keyword id="KW-1185">Reference proteome</keyword>
<keyword id="KW-0808">Transferase</keyword>
<keyword id="KW-0812">Transmembrane</keyword>
<keyword id="KW-1133">Transmembrane helix</keyword>
<organism>
    <name type="scientific">Kluyveromyces lactis (strain ATCC 8585 / CBS 2359 / DSM 70799 / NBRC 1267 / NRRL Y-1140 / WM37)</name>
    <name type="common">Yeast</name>
    <name type="synonym">Candida sphaerica</name>
    <dbReference type="NCBI Taxonomy" id="284590"/>
    <lineage>
        <taxon>Eukaryota</taxon>
        <taxon>Fungi</taxon>
        <taxon>Dikarya</taxon>
        <taxon>Ascomycota</taxon>
        <taxon>Saccharomycotina</taxon>
        <taxon>Saccharomycetes</taxon>
        <taxon>Saccharomycetales</taxon>
        <taxon>Saccharomycetaceae</taxon>
        <taxon>Kluyveromyces</taxon>
    </lineage>
</organism>
<comment type="function">
    <text evidence="1">Ethanolamine phosphate transferase involved in glycosylphosphatidylinositol-anchor biosynthesis. Transfers ethanolamine phosphate to the first alpha-1,4-linked mannose of the glycosylphosphatidylinositol precursor of GPI-anchor (By similarity).</text>
</comment>
<comment type="pathway">
    <text>Glycolipid biosynthesis; glycosylphosphatidylinositol-anchor biosynthesis.</text>
</comment>
<comment type="subcellular location">
    <subcellularLocation>
        <location evidence="1">Endoplasmic reticulum membrane</location>
        <topology evidence="1">Multi-pass membrane protein</topology>
    </subcellularLocation>
</comment>
<comment type="similarity">
    <text evidence="3">Belongs to the PIGG/PIGN/PIGO family. PIGN subfamily.</text>
</comment>
<proteinExistence type="inferred from homology"/>
<evidence type="ECO:0000250" key="1"/>
<evidence type="ECO:0000255" key="2"/>
<evidence type="ECO:0000305" key="3"/>
<gene>
    <name type="primary">MCD4</name>
    <name type="ordered locus">KLLA0B07249g</name>
</gene>